<gene>
    <name evidence="1" type="primary">smpB</name>
    <name type="ordered locus">Atu1025</name>
    <name type="ORF">AGR_C_1885</name>
</gene>
<dbReference type="EMBL" id="AE007869">
    <property type="protein sequence ID" value="AAK86833.2"/>
    <property type="molecule type" value="Genomic_DNA"/>
</dbReference>
<dbReference type="PIR" id="AH2702">
    <property type="entry name" value="AH2702"/>
</dbReference>
<dbReference type="PIR" id="H97484">
    <property type="entry name" value="H97484"/>
</dbReference>
<dbReference type="RefSeq" id="NP_354048.2">
    <property type="nucleotide sequence ID" value="NC_003062.2"/>
</dbReference>
<dbReference type="RefSeq" id="WP_010971340.1">
    <property type="nucleotide sequence ID" value="NC_003062.2"/>
</dbReference>
<dbReference type="SMR" id="Q8UGL2"/>
<dbReference type="STRING" id="176299.Atu1025"/>
<dbReference type="EnsemblBacteria" id="AAK86833">
    <property type="protein sequence ID" value="AAK86833"/>
    <property type="gene ID" value="Atu1025"/>
</dbReference>
<dbReference type="GeneID" id="1133063"/>
<dbReference type="KEGG" id="atu:Atu1025"/>
<dbReference type="PATRIC" id="fig|176299.10.peg.1038"/>
<dbReference type="eggNOG" id="COG0691">
    <property type="taxonomic scope" value="Bacteria"/>
</dbReference>
<dbReference type="HOGENOM" id="CLU_108953_0_1_5"/>
<dbReference type="OrthoDB" id="9805462at2"/>
<dbReference type="PhylomeDB" id="Q8UGL2"/>
<dbReference type="BioCyc" id="AGRO:ATU1025-MONOMER"/>
<dbReference type="Proteomes" id="UP000000813">
    <property type="component" value="Chromosome circular"/>
</dbReference>
<dbReference type="GO" id="GO:0005829">
    <property type="term" value="C:cytosol"/>
    <property type="evidence" value="ECO:0007669"/>
    <property type="project" value="TreeGrafter"/>
</dbReference>
<dbReference type="GO" id="GO:0003723">
    <property type="term" value="F:RNA binding"/>
    <property type="evidence" value="ECO:0007669"/>
    <property type="project" value="UniProtKB-UniRule"/>
</dbReference>
<dbReference type="GO" id="GO:0070929">
    <property type="term" value="P:trans-translation"/>
    <property type="evidence" value="ECO:0007669"/>
    <property type="project" value="UniProtKB-UniRule"/>
</dbReference>
<dbReference type="CDD" id="cd09294">
    <property type="entry name" value="SmpB"/>
    <property type="match status" value="1"/>
</dbReference>
<dbReference type="Gene3D" id="2.40.280.10">
    <property type="match status" value="1"/>
</dbReference>
<dbReference type="HAMAP" id="MF_00023">
    <property type="entry name" value="SmpB"/>
    <property type="match status" value="1"/>
</dbReference>
<dbReference type="InterPro" id="IPR023620">
    <property type="entry name" value="SmpB"/>
</dbReference>
<dbReference type="InterPro" id="IPR000037">
    <property type="entry name" value="SsrA-bd_prot"/>
</dbReference>
<dbReference type="InterPro" id="IPR020081">
    <property type="entry name" value="SsrA-bd_prot_CS"/>
</dbReference>
<dbReference type="NCBIfam" id="NF003843">
    <property type="entry name" value="PRK05422.1"/>
    <property type="match status" value="1"/>
</dbReference>
<dbReference type="NCBIfam" id="TIGR00086">
    <property type="entry name" value="smpB"/>
    <property type="match status" value="1"/>
</dbReference>
<dbReference type="PANTHER" id="PTHR30308:SF2">
    <property type="entry name" value="SSRA-BINDING PROTEIN"/>
    <property type="match status" value="1"/>
</dbReference>
<dbReference type="PANTHER" id="PTHR30308">
    <property type="entry name" value="TMRNA-BINDING COMPONENT OF TRANS-TRANSLATION TAGGING COMPLEX"/>
    <property type="match status" value="1"/>
</dbReference>
<dbReference type="Pfam" id="PF01668">
    <property type="entry name" value="SmpB"/>
    <property type="match status" value="1"/>
</dbReference>
<dbReference type="SUPFAM" id="SSF74982">
    <property type="entry name" value="Small protein B (SmpB)"/>
    <property type="match status" value="1"/>
</dbReference>
<dbReference type="PROSITE" id="PS01317">
    <property type="entry name" value="SSRP"/>
    <property type="match status" value="1"/>
</dbReference>
<protein>
    <recommendedName>
        <fullName evidence="1">SsrA-binding protein</fullName>
    </recommendedName>
    <alternativeName>
        <fullName evidence="1">Small protein B</fullName>
    </alternativeName>
</protein>
<reference key="1">
    <citation type="journal article" date="2001" name="Science">
        <title>The genome of the natural genetic engineer Agrobacterium tumefaciens C58.</title>
        <authorList>
            <person name="Wood D.W."/>
            <person name="Setubal J.C."/>
            <person name="Kaul R."/>
            <person name="Monks D.E."/>
            <person name="Kitajima J.P."/>
            <person name="Okura V.K."/>
            <person name="Zhou Y."/>
            <person name="Chen L."/>
            <person name="Wood G.E."/>
            <person name="Almeida N.F. Jr."/>
            <person name="Woo L."/>
            <person name="Chen Y."/>
            <person name="Paulsen I.T."/>
            <person name="Eisen J.A."/>
            <person name="Karp P.D."/>
            <person name="Bovee D. Sr."/>
            <person name="Chapman P."/>
            <person name="Clendenning J."/>
            <person name="Deatherage G."/>
            <person name="Gillet W."/>
            <person name="Grant C."/>
            <person name="Kutyavin T."/>
            <person name="Levy R."/>
            <person name="Li M.-J."/>
            <person name="McClelland E."/>
            <person name="Palmieri A."/>
            <person name="Raymond C."/>
            <person name="Rouse G."/>
            <person name="Saenphimmachak C."/>
            <person name="Wu Z."/>
            <person name="Romero P."/>
            <person name="Gordon D."/>
            <person name="Zhang S."/>
            <person name="Yoo H."/>
            <person name="Tao Y."/>
            <person name="Biddle P."/>
            <person name="Jung M."/>
            <person name="Krespan W."/>
            <person name="Perry M."/>
            <person name="Gordon-Kamm B."/>
            <person name="Liao L."/>
            <person name="Kim S."/>
            <person name="Hendrick C."/>
            <person name="Zhao Z.-Y."/>
            <person name="Dolan M."/>
            <person name="Chumley F."/>
            <person name="Tingey S.V."/>
            <person name="Tomb J.-F."/>
            <person name="Gordon M.P."/>
            <person name="Olson M.V."/>
            <person name="Nester E.W."/>
        </authorList>
    </citation>
    <scope>NUCLEOTIDE SEQUENCE [LARGE SCALE GENOMIC DNA]</scope>
    <source>
        <strain>C58 / ATCC 33970</strain>
    </source>
</reference>
<reference key="2">
    <citation type="journal article" date="2001" name="Science">
        <title>Genome sequence of the plant pathogen and biotechnology agent Agrobacterium tumefaciens C58.</title>
        <authorList>
            <person name="Goodner B."/>
            <person name="Hinkle G."/>
            <person name="Gattung S."/>
            <person name="Miller N."/>
            <person name="Blanchard M."/>
            <person name="Qurollo B."/>
            <person name="Goldman B.S."/>
            <person name="Cao Y."/>
            <person name="Askenazi M."/>
            <person name="Halling C."/>
            <person name="Mullin L."/>
            <person name="Houmiel K."/>
            <person name="Gordon J."/>
            <person name="Vaudin M."/>
            <person name="Iartchouk O."/>
            <person name="Epp A."/>
            <person name="Liu F."/>
            <person name="Wollam C."/>
            <person name="Allinger M."/>
            <person name="Doughty D."/>
            <person name="Scott C."/>
            <person name="Lappas C."/>
            <person name="Markelz B."/>
            <person name="Flanagan C."/>
            <person name="Crowell C."/>
            <person name="Gurson J."/>
            <person name="Lomo C."/>
            <person name="Sear C."/>
            <person name="Strub G."/>
            <person name="Cielo C."/>
            <person name="Slater S."/>
        </authorList>
    </citation>
    <scope>NUCLEOTIDE SEQUENCE [LARGE SCALE GENOMIC DNA]</scope>
    <source>
        <strain>C58 / ATCC 33970</strain>
    </source>
</reference>
<keyword id="KW-0963">Cytoplasm</keyword>
<keyword id="KW-1185">Reference proteome</keyword>
<keyword id="KW-0694">RNA-binding</keyword>
<proteinExistence type="inferred from homology"/>
<comment type="function">
    <text evidence="1">Required for rescue of stalled ribosomes mediated by trans-translation. Binds to transfer-messenger RNA (tmRNA), required for stable association of tmRNA with ribosomes. tmRNA and SmpB together mimic tRNA shape, replacing the anticodon stem-loop with SmpB. tmRNA is encoded by the ssrA gene; the 2 termini fold to resemble tRNA(Ala) and it encodes a 'tag peptide', a short internal open reading frame. During trans-translation Ala-aminoacylated tmRNA acts like a tRNA, entering the A-site of stalled ribosomes, displacing the stalled mRNA. The ribosome then switches to translate the ORF on the tmRNA; the nascent peptide is terminated with the 'tag peptide' encoded by the tmRNA and targeted for degradation. The ribosome is freed to recommence translation, which seems to be the essential function of trans-translation.</text>
</comment>
<comment type="subcellular location">
    <subcellularLocation>
        <location evidence="1">Cytoplasm</location>
    </subcellularLocation>
    <text evidence="1">The tmRNA-SmpB complex associates with stalled 70S ribosomes.</text>
</comment>
<comment type="similarity">
    <text evidence="1">Belongs to the SmpB family.</text>
</comment>
<evidence type="ECO:0000255" key="1">
    <source>
        <dbReference type="HAMAP-Rule" id="MF_00023"/>
    </source>
</evidence>
<evidence type="ECO:0000256" key="2">
    <source>
        <dbReference type="SAM" id="MobiDB-lite"/>
    </source>
</evidence>
<feature type="chain" id="PRO_0000102891" description="SsrA-binding protein">
    <location>
        <begin position="1"/>
        <end position="160"/>
    </location>
</feature>
<feature type="region of interest" description="Disordered" evidence="2">
    <location>
        <begin position="133"/>
        <end position="160"/>
    </location>
</feature>
<feature type="compositionally biased region" description="Basic and acidic residues" evidence="2">
    <location>
        <begin position="137"/>
        <end position="149"/>
    </location>
</feature>
<name>SSRP_AGRFC</name>
<sequence length="160" mass="18627">MAPKGSQRVVNKIVAENRKARFNYEIIDTYEAGLVLTGTEVKSLREGKANIAESYASDEGDEIWLINSHLPEYLQANRFNHEPRRRRKLLLNKREINRLRAGINRDGMTLVPLKVYFNEKGRAKLELALAKGKKLHDKRETEKERDWNRQKSRLLKGNSQ</sequence>
<accession>Q8UGL2</accession>
<organism>
    <name type="scientific">Agrobacterium fabrum (strain C58 / ATCC 33970)</name>
    <name type="common">Agrobacterium tumefaciens (strain C58)</name>
    <dbReference type="NCBI Taxonomy" id="176299"/>
    <lineage>
        <taxon>Bacteria</taxon>
        <taxon>Pseudomonadati</taxon>
        <taxon>Pseudomonadota</taxon>
        <taxon>Alphaproteobacteria</taxon>
        <taxon>Hyphomicrobiales</taxon>
        <taxon>Rhizobiaceae</taxon>
        <taxon>Rhizobium/Agrobacterium group</taxon>
        <taxon>Agrobacterium</taxon>
        <taxon>Agrobacterium tumefaciens complex</taxon>
    </lineage>
</organism>